<keyword id="KW-0002">3D-structure</keyword>
<keyword id="KW-0238">DNA-binding</keyword>
<keyword id="KW-1048">Host nucleus</keyword>
<keyword id="KW-0378">Hydrolase</keyword>
<keyword id="KW-1185">Reference proteome</keyword>
<keyword id="KW-0231">Viral genome packaging</keyword>
<keyword id="KW-1188">Viral release from host cell</keyword>
<sequence length="735" mass="80923">MFGQQLASDVQQYLERLEKQRQLKVGADEASAGLTMGGDALRVPFLDFATATPKRHQTVVPGVGTLHDCCEHSPLFSAVARRLLFNSLVPAQLKGRDFGGDHTAKLEFLAPELVRAVARLRFKECAPADVVPQRNAYYSVLNTFQALHRSEAFRQLVHFVRDFAQLLKTSFRASSLTETTGPPKKRAKVDVATHGRTYGTLELFQKMILMHATYFLAAVLLGDHAEQVNTFLRLVFEIPLFSDAAVRHFRQRATVFLVPRRHGKTWFLVPLIALSLASFRGIKIGYTAHIRKATEPVFEEIDACLRGWFGSARVDHVKGETISFSFPDGSRSTIVFASSHNTNGIRGQDFNLLFVDEANFIRPDAVQTIMGFLNQANCKIIFVSSTNTGKASTSFLYNLRGAADELLNVVTYICDDHMPRVVTHTNATACSCYILNKPVFITMDGAVRRTADLFLADSFMQEIIGGQARETGDDRPVLTKSAGERFLLYRPSTTTNSGLMAPDLYVYVDPAFTANTRASGTGVAVVGRYRDDYIIFALEHFFLRALTGSAPADIARCVVHSLTQVLALHPGAFRGVRVAVEGNSSQDSAVAIATHVHTEMHRLLASEGADAGSGPELLFYHCEPPGSAVLYPFFLLNKQKTPAFEHFIKKFNSGGVMASQEIVSATVRLQTDPVEYLLEQLNNLTETVSPNTDVRTYSGKRNGASDDLMVAVIMAIYLAAQAGPPHTFAPITRVS</sequence>
<protein>
    <recommendedName>
        <fullName evidence="1">Tripartite terminase subunit 3</fullName>
        <ecNumber evidence="1">3.1.-.-</ecNumber>
    </recommendedName>
    <alternativeName>
        <fullName evidence="1">Terminase large subunit</fullName>
    </alternativeName>
</protein>
<proteinExistence type="evidence at protein level"/>
<name>TRM3_HHV11</name>
<organismHost>
    <name type="scientific">Homo sapiens</name>
    <name type="common">Human</name>
    <dbReference type="NCBI Taxonomy" id="9606"/>
</organismHost>
<gene>
    <name evidence="1" type="primary">TRM3</name>
    <name type="ordered locus">UL15</name>
</gene>
<comment type="function">
    <text evidence="1">Component of the molecular motor that translocates viral genomic DNA in empty capsid during DNA packaging. Forms a tripartite terminase complex together with TRM1 and TRM2 in the host cytoplasm. Once the complex reaches the host nucleus, it interacts with the capsid portal vertex. This portal forms a ring in which genomic DNA is translocated into the capsid. TRM3 carries an RNase H-like nuclease activity that plays an important role for the cleavage of concatemeric viral DNA into unit length genomes.</text>
</comment>
<comment type="subunit">
    <text evidence="1 2 4 5">Interacts with the terminase subunits TRM1 and TRM2. Interacts with portal protein.</text>
</comment>
<comment type="interaction">
    <interactant intactId="EBI-7032965">
        <id>P04295</id>
    </interactant>
    <interactant intactId="EBI-7032948">
        <id>P10212</id>
        <label>TRM1</label>
    </interactant>
    <organismsDiffer>false</organismsDiffer>
    <experiments>8</experiments>
</comment>
<comment type="interaction">
    <interactant intactId="EBI-7032965">
        <id>P04295</id>
    </interactant>
    <interactant intactId="EBI-7033000">
        <id>P10217</id>
        <label>TRM2</label>
    </interactant>
    <organismsDiffer>false</organismsDiffer>
    <experiments>6</experiments>
</comment>
<comment type="subcellular location">
    <subcellularLocation>
        <location evidence="1 3 4">Host nucleus</location>
    </subcellularLocation>
    <text evidence="1 4">Responsible for the nuclear localization of the two others subunits TRM1 and TRM2.</text>
</comment>
<comment type="similarity">
    <text evidence="1">Belongs to the herpesviridae TRM3 protein family.</text>
</comment>
<evidence type="ECO:0000255" key="1">
    <source>
        <dbReference type="HAMAP-Rule" id="MF_04013"/>
    </source>
</evidence>
<evidence type="ECO:0000269" key="2">
    <source>
    </source>
</evidence>
<evidence type="ECO:0000269" key="3">
    <source>
    </source>
</evidence>
<evidence type="ECO:0000269" key="4">
    <source>
    </source>
</evidence>
<evidence type="ECO:0000269" key="5">
    <source>
    </source>
</evidence>
<evidence type="ECO:0000269" key="6">
    <source>
    </source>
</evidence>
<evidence type="ECO:0007829" key="7">
    <source>
        <dbReference type="PDB" id="4IOX"/>
    </source>
</evidence>
<evidence type="ECO:0007829" key="8">
    <source>
        <dbReference type="PDB" id="6M5R"/>
    </source>
</evidence>
<dbReference type="EC" id="3.1.-.-" evidence="1"/>
<dbReference type="EMBL" id="X14112">
    <property type="protein sequence ID" value="CAA32330.1"/>
    <property type="molecule type" value="Genomic_DNA"/>
</dbReference>
<dbReference type="EMBL" id="X03839">
    <property type="protein sequence ID" value="CAA27456.1"/>
    <property type="status" value="ALT_TERM"/>
    <property type="molecule type" value="Genomic_DNA"/>
</dbReference>
<dbReference type="PIR" id="A03781">
    <property type="entry name" value="WMBE31"/>
</dbReference>
<dbReference type="PIR" id="F30083">
    <property type="entry name" value="WMBET5"/>
</dbReference>
<dbReference type="RefSeq" id="YP_009137089.1">
    <property type="nucleotide sequence ID" value="NC_001806.2"/>
</dbReference>
<dbReference type="PDB" id="4IOX">
    <property type="method" value="X-ray"/>
    <property type="resolution" value="2.46 A"/>
    <property type="chains" value="A/B/C=471-735"/>
</dbReference>
<dbReference type="PDB" id="5HUW">
    <property type="method" value="X-ray"/>
    <property type="resolution" value="1.95 A"/>
    <property type="chains" value="A/B=181-192"/>
</dbReference>
<dbReference type="PDB" id="6M5R">
    <property type="method" value="EM"/>
    <property type="resolution" value="3.50 A"/>
    <property type="chains" value="A=35-728"/>
</dbReference>
<dbReference type="PDB" id="6M5S">
    <property type="method" value="EM"/>
    <property type="resolution" value="3.90 A"/>
    <property type="chains" value="A=35-727"/>
</dbReference>
<dbReference type="PDB" id="6M5T">
    <property type="method" value="EM"/>
    <property type="resolution" value="2.46 A"/>
    <property type="chains" value="A=471-735"/>
</dbReference>
<dbReference type="PDB" id="6M5U">
    <property type="method" value="EM"/>
    <property type="resolution" value="3.80 A"/>
    <property type="chains" value="A=35-728"/>
</dbReference>
<dbReference type="PDB" id="6M5V">
    <property type="method" value="EM"/>
    <property type="resolution" value="4.50 A"/>
    <property type="chains" value="A=38-727"/>
</dbReference>
<dbReference type="PDBsum" id="4IOX"/>
<dbReference type="PDBsum" id="5HUW"/>
<dbReference type="PDBsum" id="6M5R"/>
<dbReference type="PDBsum" id="6M5S"/>
<dbReference type="PDBsum" id="6M5T"/>
<dbReference type="PDBsum" id="6M5U"/>
<dbReference type="PDBsum" id="6M5V"/>
<dbReference type="EMDB" id="EMD-30090"/>
<dbReference type="EMDB" id="EMD-30091"/>
<dbReference type="EMDB" id="EMD-30092"/>
<dbReference type="EMDB" id="EMD-30093"/>
<dbReference type="EMDB" id="EMD-30094"/>
<dbReference type="SMR" id="P04295"/>
<dbReference type="IntAct" id="P04295">
    <property type="interactions" value="3"/>
</dbReference>
<dbReference type="MINT" id="P04295"/>
<dbReference type="DNASU" id="2703385"/>
<dbReference type="GeneID" id="2703385"/>
<dbReference type="KEGG" id="vg:2703385"/>
<dbReference type="EvolutionaryTrace" id="P04295"/>
<dbReference type="Proteomes" id="UP000009294">
    <property type="component" value="Segment"/>
</dbReference>
<dbReference type="GO" id="GO:0042025">
    <property type="term" value="C:host cell nucleus"/>
    <property type="evidence" value="ECO:0007669"/>
    <property type="project" value="UniProtKB-SubCell"/>
</dbReference>
<dbReference type="GO" id="GO:0003677">
    <property type="term" value="F:DNA binding"/>
    <property type="evidence" value="ECO:0007669"/>
    <property type="project" value="UniProtKB-KW"/>
</dbReference>
<dbReference type="GO" id="GO:0016787">
    <property type="term" value="F:hydrolase activity"/>
    <property type="evidence" value="ECO:0007669"/>
    <property type="project" value="UniProtKB-KW"/>
</dbReference>
<dbReference type="GO" id="GO:0051276">
    <property type="term" value="P:chromosome organization"/>
    <property type="evidence" value="ECO:0007669"/>
    <property type="project" value="InterPro"/>
</dbReference>
<dbReference type="Gene3D" id="3.30.420.320">
    <property type="match status" value="1"/>
</dbReference>
<dbReference type="Gene3D" id="3.40.50.300">
    <property type="entry name" value="P-loop containing nucleotide triphosphate hydrolases"/>
    <property type="match status" value="1"/>
</dbReference>
<dbReference type="HAMAP" id="MF_04013">
    <property type="entry name" value="HSV_TRM3"/>
    <property type="match status" value="1"/>
</dbReference>
<dbReference type="InterPro" id="IPR003498">
    <property type="entry name" value="DNA_pack_C"/>
</dbReference>
<dbReference type="InterPro" id="IPR038435">
    <property type="entry name" value="DNA_pack_C_sf"/>
</dbReference>
<dbReference type="InterPro" id="IPR003499">
    <property type="entry name" value="DNA_pack_N"/>
</dbReference>
<dbReference type="InterPro" id="IPR033663">
    <property type="entry name" value="HSV_TRM3"/>
</dbReference>
<dbReference type="InterPro" id="IPR027417">
    <property type="entry name" value="P-loop_NTPase"/>
</dbReference>
<dbReference type="Pfam" id="PF02499">
    <property type="entry name" value="DNA_pack_C"/>
    <property type="match status" value="1"/>
</dbReference>
<dbReference type="Pfam" id="PF02500">
    <property type="entry name" value="DNA_pack_N"/>
    <property type="match status" value="1"/>
</dbReference>
<accession>P04295</accession>
<feature type="chain" id="PRO_0000115940" description="Tripartite terminase subunit 3">
    <location>
        <begin position="1"/>
        <end position="735"/>
    </location>
</feature>
<feature type="short sequence motif" description="Nuclear localization signal" evidence="1 4">
    <location>
        <begin position="183"/>
        <end position="189"/>
    </location>
</feature>
<feature type="short sequence motif" description="Walker A motif" evidence="1">
    <location>
        <begin position="258"/>
        <end position="265"/>
    </location>
</feature>
<feature type="short sequence motif" description="Walker B motif" evidence="1">
    <location>
        <begin position="352"/>
        <end position="357"/>
    </location>
</feature>
<feature type="active site" description="For ATPase activity" evidence="1">
    <location>
        <position position="357"/>
    </location>
</feature>
<feature type="active site" description="For nuclease activity" evidence="1 6">
    <location>
        <position position="509"/>
    </location>
</feature>
<feature type="active site" description="For nuclease activity" evidence="1 6">
    <location>
        <position position="581"/>
    </location>
</feature>
<feature type="active site" description="For nuclease activity" evidence="1 6">
    <location>
        <position position="707"/>
    </location>
</feature>
<feature type="helix" evidence="8">
    <location>
        <begin position="39"/>
        <end position="41"/>
    </location>
</feature>
<feature type="turn" evidence="8">
    <location>
        <begin position="54"/>
        <end position="56"/>
    </location>
</feature>
<feature type="helix" evidence="8">
    <location>
        <begin position="68"/>
        <end position="70"/>
    </location>
</feature>
<feature type="helix" evidence="8">
    <location>
        <begin position="74"/>
        <end position="77"/>
    </location>
</feature>
<feature type="turn" evidence="8">
    <location>
        <begin position="78"/>
        <end position="81"/>
    </location>
</feature>
<feature type="helix" evidence="8">
    <location>
        <begin position="82"/>
        <end position="88"/>
    </location>
</feature>
<feature type="helix" evidence="8">
    <location>
        <begin position="91"/>
        <end position="93"/>
    </location>
</feature>
<feature type="strand" evidence="8">
    <location>
        <begin position="96"/>
        <end position="98"/>
    </location>
</feature>
<feature type="strand" evidence="8">
    <location>
        <begin position="100"/>
        <end position="102"/>
    </location>
</feature>
<feature type="turn" evidence="8">
    <location>
        <begin position="104"/>
        <end position="106"/>
    </location>
</feature>
<feature type="helix" evidence="8">
    <location>
        <begin position="111"/>
        <end position="118"/>
    </location>
</feature>
<feature type="helix" evidence="8">
    <location>
        <begin position="127"/>
        <end position="140"/>
    </location>
</feature>
<feature type="helix" evidence="8">
    <location>
        <begin position="142"/>
        <end position="145"/>
    </location>
</feature>
<feature type="turn" evidence="8">
    <location>
        <begin position="146"/>
        <end position="149"/>
    </location>
</feature>
<feature type="helix" evidence="8">
    <location>
        <begin position="151"/>
        <end position="168"/>
    </location>
</feature>
<feature type="strand" evidence="8">
    <location>
        <begin position="171"/>
        <end position="173"/>
    </location>
</feature>
<feature type="helix" evidence="8">
    <location>
        <begin position="203"/>
        <end position="220"/>
    </location>
</feature>
<feature type="turn" evidence="8">
    <location>
        <begin position="223"/>
        <end position="228"/>
    </location>
</feature>
<feature type="helix" evidence="8">
    <location>
        <begin position="229"/>
        <end position="235"/>
    </location>
</feature>
<feature type="helix" evidence="8">
    <location>
        <begin position="243"/>
        <end position="247"/>
    </location>
</feature>
<feature type="helix" evidence="8">
    <location>
        <begin position="248"/>
        <end position="250"/>
    </location>
</feature>
<feature type="strand" evidence="8">
    <location>
        <begin position="255"/>
        <end position="258"/>
    </location>
</feature>
<feature type="helix" evidence="8">
    <location>
        <begin position="264"/>
        <end position="276"/>
    </location>
</feature>
<feature type="strand" evidence="8">
    <location>
        <begin position="277"/>
        <end position="281"/>
    </location>
</feature>
<feature type="helix" evidence="8">
    <location>
        <begin position="291"/>
        <end position="293"/>
    </location>
</feature>
<feature type="helix" evidence="8">
    <location>
        <begin position="294"/>
        <end position="307"/>
    </location>
</feature>
<feature type="helix" evidence="8">
    <location>
        <begin position="311"/>
        <end position="313"/>
    </location>
</feature>
<feature type="strand" evidence="8">
    <location>
        <begin position="314"/>
        <end position="316"/>
    </location>
</feature>
<feature type="strand" evidence="8">
    <location>
        <begin position="322"/>
        <end position="326"/>
    </location>
</feature>
<feature type="turn" evidence="8">
    <location>
        <begin position="327"/>
        <end position="329"/>
    </location>
</feature>
<feature type="strand" evidence="8">
    <location>
        <begin position="330"/>
        <end position="333"/>
    </location>
</feature>
<feature type="helix" evidence="8">
    <location>
        <begin position="337"/>
        <end position="339"/>
    </location>
</feature>
<feature type="strand" evidence="8">
    <location>
        <begin position="341"/>
        <end position="346"/>
    </location>
</feature>
<feature type="helix" evidence="8">
    <location>
        <begin position="366"/>
        <end position="373"/>
    </location>
</feature>
<feature type="strand" evidence="8">
    <location>
        <begin position="388"/>
        <end position="391"/>
    </location>
</feature>
<feature type="helix" evidence="8">
    <location>
        <begin position="394"/>
        <end position="397"/>
    </location>
</feature>
<feature type="helix" evidence="8">
    <location>
        <begin position="398"/>
        <end position="400"/>
    </location>
</feature>
<feature type="strand" evidence="8">
    <location>
        <begin position="407"/>
        <end position="409"/>
    </location>
</feature>
<feature type="strand" evidence="8">
    <location>
        <begin position="415"/>
        <end position="418"/>
    </location>
</feature>
<feature type="helix" evidence="8">
    <location>
        <begin position="419"/>
        <end position="423"/>
    </location>
</feature>
<feature type="turn" evidence="8">
    <location>
        <begin position="424"/>
        <end position="426"/>
    </location>
</feature>
<feature type="strand" evidence="8">
    <location>
        <begin position="429"/>
        <end position="431"/>
    </location>
</feature>
<feature type="helix" evidence="8">
    <location>
        <begin position="446"/>
        <end position="452"/>
    </location>
</feature>
<feature type="helix" evidence="8">
    <location>
        <begin position="455"/>
        <end position="457"/>
    </location>
</feature>
<feature type="strand" evidence="8">
    <location>
        <begin position="465"/>
        <end position="467"/>
    </location>
</feature>
<feature type="helix" evidence="7">
    <location>
        <begin position="480"/>
        <end position="488"/>
    </location>
</feature>
<feature type="helix" evidence="7">
    <location>
        <begin position="497"/>
        <end position="499"/>
    </location>
</feature>
<feature type="strand" evidence="7">
    <location>
        <begin position="502"/>
        <end position="509"/>
    </location>
</feature>
<feature type="strand" evidence="7">
    <location>
        <begin position="514"/>
        <end position="516"/>
    </location>
</feature>
<feature type="strand" evidence="7">
    <location>
        <begin position="520"/>
        <end position="529"/>
    </location>
</feature>
<feature type="strand" evidence="7">
    <location>
        <begin position="532"/>
        <end position="542"/>
    </location>
</feature>
<feature type="helix" evidence="7">
    <location>
        <begin position="550"/>
        <end position="568"/>
    </location>
</feature>
<feature type="strand" evidence="7">
    <location>
        <begin position="574"/>
        <end position="581"/>
    </location>
</feature>
<feature type="helix" evidence="7">
    <location>
        <begin position="586"/>
        <end position="600"/>
    </location>
</feature>
<feature type="strand" evidence="7">
    <location>
        <begin position="616"/>
        <end position="619"/>
    </location>
</feature>
<feature type="helix" evidence="7">
    <location>
        <begin position="640"/>
        <end position="652"/>
    </location>
</feature>
<feature type="strand" evidence="7">
    <location>
        <begin position="656"/>
        <end position="663"/>
    </location>
</feature>
<feature type="strand" evidence="7">
    <location>
        <begin position="665"/>
        <end position="671"/>
    </location>
</feature>
<feature type="helix" evidence="7">
    <location>
        <begin position="673"/>
        <end position="681"/>
    </location>
</feature>
<feature type="helix" evidence="7">
    <location>
        <begin position="707"/>
        <end position="719"/>
    </location>
</feature>
<reference key="1">
    <citation type="journal article" date="1988" name="J. Gen. Virol.">
        <title>The complete DNA sequence of the long unique region in the genome of herpes simplex virus type 1.</title>
        <authorList>
            <person name="McGeoch D.J."/>
            <person name="Dalrymple M.A."/>
            <person name="Davison A.J."/>
            <person name="Dolan A."/>
            <person name="Frame M.C."/>
            <person name="McNab D."/>
            <person name="Perry L.J."/>
            <person name="Scott J.E."/>
            <person name="Taylor P."/>
        </authorList>
    </citation>
    <scope>NUCLEOTIDE SEQUENCE [GENOMIC DNA]</scope>
</reference>
<reference key="2">
    <citation type="journal article" date="1986" name="Nucleic Acids Res.">
        <title>DNA sequence of the region in the genome of herpes simplex virus type 1 containing the exonuclease gene and neighbouring genes.</title>
        <authorList>
            <person name="McGeoch D.J."/>
            <person name="Dolan A."/>
            <person name="Frame M.C."/>
        </authorList>
    </citation>
    <scope>NUCLEOTIDE SEQUENCE [GENOMIC DNA] OF 1-343</scope>
</reference>
<reference key="3">
    <citation type="journal article" date="2003" name="J. Virol.">
        <title>Herpes simplex virus type 1 portal protein UL6 interacts with the putative terminase subunits UL15 and UL28.</title>
        <authorList>
            <person name="White C.A."/>
            <person name="Stow N.D."/>
            <person name="Patel A.H."/>
            <person name="Hughes M."/>
            <person name="Preston V.G."/>
        </authorList>
    </citation>
    <scope>INTERACTION WITH PORTAL PROTEIN</scope>
</reference>
<reference key="4">
    <citation type="journal article" date="2006" name="J. Virol.">
        <title>Herpes simplex virus 1 DNA packaging proteins encoded by UL6, UL15, UL17, UL28, and UL33 are located on the external surface of the viral capsid.</title>
        <authorList>
            <person name="Wills E."/>
            <person name="Scholtes L."/>
            <person name="Baines J.D."/>
        </authorList>
    </citation>
    <scope>SUBCELLULAR LOCATION</scope>
</reference>
<reference key="5">
    <citation type="journal article" date="2007" name="J. Virol.">
        <title>Putative terminase subunits of herpes simplex virus 1 form a complex in the cytoplasm and interact with portal protein in the nucleus.</title>
        <authorList>
            <person name="Yang K."/>
            <person name="Homa F."/>
            <person name="Baines J.D."/>
        </authorList>
    </citation>
    <scope>INTERACTION WITH TRM1 AND PORTAL PROTEIN</scope>
    <scope>SUBCELLULAR LOCATION</scope>
    <scope>NUCLEAR LOCALIZATION SIGNAL</scope>
</reference>
<reference key="6">
    <citation type="journal article" date="2008" name="Annu. Rev. Genet.">
        <title>The bacteriophage DNA packaging motor.</title>
        <authorList>
            <person name="Rao V.B."/>
            <person name="Feiss M."/>
        </authorList>
    </citation>
    <scope>REVIEW</scope>
</reference>
<reference key="7">
    <citation type="journal article" date="2009" name="J. Virol.">
        <title>The putative leucine zipper of the UL6-encoded portal protein of herpes simplex virus 1 is necessary for interaction with pUL15 and pUL28 and their association with capsids.</title>
        <authorList>
            <person name="Yang K."/>
            <person name="Wills E."/>
            <person name="Baines J.D."/>
        </authorList>
    </citation>
    <scope>INTERACTION WITH UL6</scope>
</reference>
<reference key="8">
    <citation type="journal article" date="2013" name="J. Virol.">
        <title>The structure of the herpes simplex virus DNA-packaging terminase pUL15 nuclease domain suggests an evolutionary lineage among eukaryotic and prokaryotic viruses.</title>
        <authorList>
            <person name="Selvarajan Sigamani S."/>
            <person name="Zhao H."/>
            <person name="Kamau Y.N."/>
            <person name="Baines J.D."/>
            <person name="Tang L."/>
        </authorList>
    </citation>
    <scope>X-RAY CRYSTALLOGRAPHY (2.46 ANGSTROMS) OF 471-735</scope>
</reference>
<organism>
    <name type="scientific">Human herpesvirus 1 (strain 17)</name>
    <name type="common">HHV-1</name>
    <name type="synonym">Human herpes simplex virus 1</name>
    <dbReference type="NCBI Taxonomy" id="10299"/>
    <lineage>
        <taxon>Viruses</taxon>
        <taxon>Duplodnaviria</taxon>
        <taxon>Heunggongvirae</taxon>
        <taxon>Peploviricota</taxon>
        <taxon>Herviviricetes</taxon>
        <taxon>Herpesvirales</taxon>
        <taxon>Orthoherpesviridae</taxon>
        <taxon>Alphaherpesvirinae</taxon>
        <taxon>Simplexvirus</taxon>
        <taxon>Simplexvirus humanalpha1</taxon>
        <taxon>Human herpesvirus 1</taxon>
    </lineage>
</organism>